<evidence type="ECO:0000255" key="1">
    <source>
        <dbReference type="HAMAP-Rule" id="MF_00540"/>
    </source>
</evidence>
<dbReference type="EC" id="3.5.4.4" evidence="1"/>
<dbReference type="EMBL" id="AM286415">
    <property type="protein sequence ID" value="CAL12087.1"/>
    <property type="molecule type" value="Genomic_DNA"/>
</dbReference>
<dbReference type="RefSeq" id="WP_011816291.1">
    <property type="nucleotide sequence ID" value="NC_008800.1"/>
</dbReference>
<dbReference type="RefSeq" id="YP_001006261.1">
    <property type="nucleotide sequence ID" value="NC_008800.1"/>
</dbReference>
<dbReference type="SMR" id="A1JML4"/>
<dbReference type="KEGG" id="yen:YE2009"/>
<dbReference type="PATRIC" id="fig|393305.7.peg.2171"/>
<dbReference type="eggNOG" id="COG1816">
    <property type="taxonomic scope" value="Bacteria"/>
</dbReference>
<dbReference type="HOGENOM" id="CLU_039228_0_2_6"/>
<dbReference type="OrthoDB" id="105475at2"/>
<dbReference type="Proteomes" id="UP000000642">
    <property type="component" value="Chromosome"/>
</dbReference>
<dbReference type="GO" id="GO:0005829">
    <property type="term" value="C:cytosol"/>
    <property type="evidence" value="ECO:0007669"/>
    <property type="project" value="TreeGrafter"/>
</dbReference>
<dbReference type="GO" id="GO:0046936">
    <property type="term" value="F:2'-deoxyadenosine deaminase activity"/>
    <property type="evidence" value="ECO:0007669"/>
    <property type="project" value="RHEA"/>
</dbReference>
<dbReference type="GO" id="GO:0004000">
    <property type="term" value="F:adenosine deaminase activity"/>
    <property type="evidence" value="ECO:0007669"/>
    <property type="project" value="UniProtKB-UniRule"/>
</dbReference>
<dbReference type="GO" id="GO:0008270">
    <property type="term" value="F:zinc ion binding"/>
    <property type="evidence" value="ECO:0007669"/>
    <property type="project" value="UniProtKB-UniRule"/>
</dbReference>
<dbReference type="GO" id="GO:0006154">
    <property type="term" value="P:adenosine catabolic process"/>
    <property type="evidence" value="ECO:0007669"/>
    <property type="project" value="TreeGrafter"/>
</dbReference>
<dbReference type="GO" id="GO:0043103">
    <property type="term" value="P:hypoxanthine salvage"/>
    <property type="evidence" value="ECO:0007669"/>
    <property type="project" value="TreeGrafter"/>
</dbReference>
<dbReference type="GO" id="GO:0046103">
    <property type="term" value="P:inosine biosynthetic process"/>
    <property type="evidence" value="ECO:0007669"/>
    <property type="project" value="TreeGrafter"/>
</dbReference>
<dbReference type="GO" id="GO:0009117">
    <property type="term" value="P:nucleotide metabolic process"/>
    <property type="evidence" value="ECO:0007669"/>
    <property type="project" value="UniProtKB-KW"/>
</dbReference>
<dbReference type="GO" id="GO:0009168">
    <property type="term" value="P:purine ribonucleoside monophosphate biosynthetic process"/>
    <property type="evidence" value="ECO:0007669"/>
    <property type="project" value="UniProtKB-UniRule"/>
</dbReference>
<dbReference type="CDD" id="cd01320">
    <property type="entry name" value="ADA"/>
    <property type="match status" value="1"/>
</dbReference>
<dbReference type="FunFam" id="3.20.20.140:FF:000009">
    <property type="entry name" value="Adenosine deaminase"/>
    <property type="match status" value="1"/>
</dbReference>
<dbReference type="Gene3D" id="3.20.20.140">
    <property type="entry name" value="Metal-dependent hydrolases"/>
    <property type="match status" value="1"/>
</dbReference>
<dbReference type="HAMAP" id="MF_00540">
    <property type="entry name" value="A_deaminase"/>
    <property type="match status" value="1"/>
</dbReference>
<dbReference type="InterPro" id="IPR006650">
    <property type="entry name" value="A/AMP_deam_AS"/>
</dbReference>
<dbReference type="InterPro" id="IPR028893">
    <property type="entry name" value="A_deaminase"/>
</dbReference>
<dbReference type="InterPro" id="IPR001365">
    <property type="entry name" value="A_deaminase_dom"/>
</dbReference>
<dbReference type="InterPro" id="IPR006330">
    <property type="entry name" value="Ado/ade_deaminase"/>
</dbReference>
<dbReference type="InterPro" id="IPR032466">
    <property type="entry name" value="Metal_Hydrolase"/>
</dbReference>
<dbReference type="NCBIfam" id="TIGR01430">
    <property type="entry name" value="aden_deam"/>
    <property type="match status" value="1"/>
</dbReference>
<dbReference type="NCBIfam" id="NF006846">
    <property type="entry name" value="PRK09358.1-1"/>
    <property type="match status" value="1"/>
</dbReference>
<dbReference type="PANTHER" id="PTHR11409">
    <property type="entry name" value="ADENOSINE DEAMINASE"/>
    <property type="match status" value="1"/>
</dbReference>
<dbReference type="PANTHER" id="PTHR11409:SF43">
    <property type="entry name" value="ADENOSINE DEAMINASE"/>
    <property type="match status" value="1"/>
</dbReference>
<dbReference type="Pfam" id="PF00962">
    <property type="entry name" value="A_deaminase"/>
    <property type="match status" value="1"/>
</dbReference>
<dbReference type="SUPFAM" id="SSF51556">
    <property type="entry name" value="Metallo-dependent hydrolases"/>
    <property type="match status" value="1"/>
</dbReference>
<dbReference type="PROSITE" id="PS00485">
    <property type="entry name" value="A_DEAMINASE"/>
    <property type="match status" value="1"/>
</dbReference>
<accession>A1JML4</accession>
<reference key="1">
    <citation type="journal article" date="2006" name="PLoS Genet.">
        <title>The complete genome sequence and comparative genome analysis of the high pathogenicity Yersinia enterocolitica strain 8081.</title>
        <authorList>
            <person name="Thomson N.R."/>
            <person name="Howard S."/>
            <person name="Wren B.W."/>
            <person name="Holden M.T.G."/>
            <person name="Crossman L."/>
            <person name="Challis G.L."/>
            <person name="Churcher C."/>
            <person name="Mungall K."/>
            <person name="Brooks K."/>
            <person name="Chillingworth T."/>
            <person name="Feltwell T."/>
            <person name="Abdellah Z."/>
            <person name="Hauser H."/>
            <person name="Jagels K."/>
            <person name="Maddison M."/>
            <person name="Moule S."/>
            <person name="Sanders M."/>
            <person name="Whitehead S."/>
            <person name="Quail M.A."/>
            <person name="Dougan G."/>
            <person name="Parkhill J."/>
            <person name="Prentice M.B."/>
        </authorList>
    </citation>
    <scope>NUCLEOTIDE SEQUENCE [LARGE SCALE GENOMIC DNA]</scope>
    <source>
        <strain>NCTC 13174 / 8081</strain>
    </source>
</reference>
<keyword id="KW-0378">Hydrolase</keyword>
<keyword id="KW-0479">Metal-binding</keyword>
<keyword id="KW-0546">Nucleotide metabolism</keyword>
<keyword id="KW-0862">Zinc</keyword>
<feature type="chain" id="PRO_1000017713" description="Adenosine deaminase">
    <location>
        <begin position="1"/>
        <end position="332"/>
    </location>
</feature>
<feature type="active site" description="Proton donor" evidence="1">
    <location>
        <position position="200"/>
    </location>
</feature>
<feature type="binding site" evidence="1">
    <location>
        <position position="12"/>
    </location>
    <ligand>
        <name>Zn(2+)</name>
        <dbReference type="ChEBI" id="CHEBI:29105"/>
        <note>catalytic</note>
    </ligand>
</feature>
<feature type="binding site" evidence="1">
    <location>
        <position position="14"/>
    </location>
    <ligand>
        <name>substrate</name>
    </ligand>
</feature>
<feature type="binding site" evidence="1">
    <location>
        <position position="14"/>
    </location>
    <ligand>
        <name>Zn(2+)</name>
        <dbReference type="ChEBI" id="CHEBI:29105"/>
        <note>catalytic</note>
    </ligand>
</feature>
<feature type="binding site" evidence="1">
    <location>
        <position position="16"/>
    </location>
    <ligand>
        <name>substrate</name>
    </ligand>
</feature>
<feature type="binding site" evidence="1">
    <location>
        <position position="170"/>
    </location>
    <ligand>
        <name>substrate</name>
    </ligand>
</feature>
<feature type="binding site" evidence="1">
    <location>
        <position position="197"/>
    </location>
    <ligand>
        <name>Zn(2+)</name>
        <dbReference type="ChEBI" id="CHEBI:29105"/>
        <note>catalytic</note>
    </ligand>
</feature>
<feature type="binding site" evidence="1">
    <location>
        <position position="278"/>
    </location>
    <ligand>
        <name>Zn(2+)</name>
        <dbReference type="ChEBI" id="CHEBI:29105"/>
        <note>catalytic</note>
    </ligand>
</feature>
<feature type="binding site" evidence="1">
    <location>
        <position position="279"/>
    </location>
    <ligand>
        <name>substrate</name>
    </ligand>
</feature>
<feature type="site" description="Important for catalytic activity" evidence="1">
    <location>
        <position position="221"/>
    </location>
</feature>
<proteinExistence type="inferred from homology"/>
<name>ADD_YERE8</name>
<comment type="function">
    <text evidence="1">Catalyzes the hydrolytic deamination of adenosine and 2-deoxyadenosine.</text>
</comment>
<comment type="catalytic activity">
    <reaction evidence="1">
        <text>adenosine + H2O + H(+) = inosine + NH4(+)</text>
        <dbReference type="Rhea" id="RHEA:24408"/>
        <dbReference type="ChEBI" id="CHEBI:15377"/>
        <dbReference type="ChEBI" id="CHEBI:15378"/>
        <dbReference type="ChEBI" id="CHEBI:16335"/>
        <dbReference type="ChEBI" id="CHEBI:17596"/>
        <dbReference type="ChEBI" id="CHEBI:28938"/>
        <dbReference type="EC" id="3.5.4.4"/>
    </reaction>
    <physiologicalReaction direction="left-to-right" evidence="1">
        <dbReference type="Rhea" id="RHEA:24409"/>
    </physiologicalReaction>
</comment>
<comment type="catalytic activity">
    <reaction evidence="1">
        <text>2'-deoxyadenosine + H2O + H(+) = 2'-deoxyinosine + NH4(+)</text>
        <dbReference type="Rhea" id="RHEA:28190"/>
        <dbReference type="ChEBI" id="CHEBI:15377"/>
        <dbReference type="ChEBI" id="CHEBI:15378"/>
        <dbReference type="ChEBI" id="CHEBI:17256"/>
        <dbReference type="ChEBI" id="CHEBI:28938"/>
        <dbReference type="ChEBI" id="CHEBI:28997"/>
        <dbReference type="EC" id="3.5.4.4"/>
    </reaction>
    <physiologicalReaction direction="left-to-right" evidence="1">
        <dbReference type="Rhea" id="RHEA:28191"/>
    </physiologicalReaction>
</comment>
<comment type="cofactor">
    <cofactor evidence="1">
        <name>Zn(2+)</name>
        <dbReference type="ChEBI" id="CHEBI:29105"/>
    </cofactor>
    <text evidence="1">Binds 1 zinc ion per subunit.</text>
</comment>
<comment type="similarity">
    <text evidence="1">Belongs to the metallo-dependent hydrolases superfamily. Adenosine and AMP deaminases family. Adenosine deaminase subfamily.</text>
</comment>
<sequence length="332" mass="36396">MIDPRLPLTDIHRHLDGNIRAQTILDLGRQFNLSLPADELEALRPHVQITKTEPDLVSFLQKLDWGVAVLGSLEACRRVAYENVEDAANAGLHYAELRFSPFYMAMKHQLPVAGVVEAVIDGIQSGCRDFDIDIRLIGILSRTFGEQACLQELDGLLAHRDAITALDLAGDELGFPGGLFRSHFNRARDAGWRITVHAGEAAGPESIWQAIRELGAERIGHGVKAVEDIKLMDYLAEHNIGIESCLTSNIQTSTVASLAAHPLATFLRHGVLASINTDDPAVQGIEIANEYHIAAPAAGLTPQEIRQAQENGLTMAFISEQEKQVLRDKIRN</sequence>
<organism>
    <name type="scientific">Yersinia enterocolitica serotype O:8 / biotype 1B (strain NCTC 13174 / 8081)</name>
    <dbReference type="NCBI Taxonomy" id="393305"/>
    <lineage>
        <taxon>Bacteria</taxon>
        <taxon>Pseudomonadati</taxon>
        <taxon>Pseudomonadota</taxon>
        <taxon>Gammaproteobacteria</taxon>
        <taxon>Enterobacterales</taxon>
        <taxon>Yersiniaceae</taxon>
        <taxon>Yersinia</taxon>
    </lineage>
</organism>
<gene>
    <name evidence="1" type="primary">add</name>
    <name type="ordered locus">YE2009</name>
</gene>
<protein>
    <recommendedName>
        <fullName evidence="1">Adenosine deaminase</fullName>
        <ecNumber evidence="1">3.5.4.4</ecNumber>
    </recommendedName>
    <alternativeName>
        <fullName evidence="1">Adenosine aminohydrolase</fullName>
    </alternativeName>
</protein>